<accession>P29820</accession>
<accession>Q31NA8</accession>
<gene>
    <name type="primary">rot</name>
    <name type="ordered locus">Synpcc7942_1431</name>
</gene>
<keyword id="KW-0413">Isomerase</keyword>
<keyword id="KW-1185">Reference proteome</keyword>
<keyword id="KW-0697">Rotamase</keyword>
<sequence length="145" mass="15657">MTQAILETEKGTIRLQFFDNDAPNTVANFVKLSQDGFYDGLTFHRVIPGFMSQGGCPHGTGTGGPGYKIPCEINDNPHLAGTLSMAHAGRNTGGSQFFICHEPQPHLDGVHTTFGQTEDDESLKVVRSLRNGDRILSVKIVTDAA</sequence>
<proteinExistence type="inferred from homology"/>
<protein>
    <recommendedName>
        <fullName>Peptidyl-prolyl cis-trans isomerase</fullName>
        <shortName>PPIase</shortName>
        <ecNumber>5.2.1.8</ecNumber>
    </recommendedName>
    <alternativeName>
        <fullName>Rotamase</fullName>
    </alternativeName>
</protein>
<name>PPI_SYNE7</name>
<evidence type="ECO:0000250" key="1"/>
<evidence type="ECO:0000255" key="2">
    <source>
        <dbReference type="PROSITE-ProRule" id="PRU00156"/>
    </source>
</evidence>
<evidence type="ECO:0000305" key="3"/>
<reference key="1">
    <citation type="submission" date="1992-03" db="EMBL/GenBank/DDBJ databases">
        <authorList>
            <person name="Kaplan A."/>
        </authorList>
    </citation>
    <scope>NUCLEOTIDE SEQUENCE [GENOMIC DNA]</scope>
</reference>
<reference key="2">
    <citation type="submission" date="2005-08" db="EMBL/GenBank/DDBJ databases">
        <title>Complete sequence of chromosome 1 of Synechococcus elongatus PCC 7942.</title>
        <authorList>
            <consortium name="US DOE Joint Genome Institute"/>
            <person name="Copeland A."/>
            <person name="Lucas S."/>
            <person name="Lapidus A."/>
            <person name="Barry K."/>
            <person name="Detter J.C."/>
            <person name="Glavina T."/>
            <person name="Hammon N."/>
            <person name="Israni S."/>
            <person name="Pitluck S."/>
            <person name="Schmutz J."/>
            <person name="Larimer F."/>
            <person name="Land M."/>
            <person name="Kyrpides N."/>
            <person name="Lykidis A."/>
            <person name="Golden S."/>
            <person name="Richardson P."/>
        </authorList>
    </citation>
    <scope>NUCLEOTIDE SEQUENCE [LARGE SCALE GENOMIC DNA]</scope>
    <source>
        <strain>ATCC 33912 / PCC 7942 / FACHB-805</strain>
    </source>
</reference>
<feature type="chain" id="PRO_0000064201" description="Peptidyl-prolyl cis-trans isomerase">
    <location>
        <begin position="1"/>
        <end position="145"/>
    </location>
</feature>
<feature type="domain" description="PPIase cyclophilin-type" evidence="2">
    <location>
        <begin position="1"/>
        <end position="145"/>
    </location>
</feature>
<dbReference type="EC" id="5.2.1.8"/>
<dbReference type="EMBL" id="X65028">
    <property type="protein sequence ID" value="CAA46162.1"/>
    <property type="molecule type" value="Genomic_DNA"/>
</dbReference>
<dbReference type="EMBL" id="CP000100">
    <property type="protein sequence ID" value="ABB57461.1"/>
    <property type="molecule type" value="Genomic_DNA"/>
</dbReference>
<dbReference type="PIR" id="S19922">
    <property type="entry name" value="CSYC42"/>
</dbReference>
<dbReference type="RefSeq" id="WP_011242439.1">
    <property type="nucleotide sequence ID" value="NZ_JACJTX010000004.1"/>
</dbReference>
<dbReference type="SMR" id="P29820"/>
<dbReference type="STRING" id="1140.Synpcc7942_1431"/>
<dbReference type="PaxDb" id="1140-Synpcc7942_1431"/>
<dbReference type="KEGG" id="syf:Synpcc7942_1431"/>
<dbReference type="eggNOG" id="COG0652">
    <property type="taxonomic scope" value="Bacteria"/>
</dbReference>
<dbReference type="HOGENOM" id="CLU_012062_16_4_3"/>
<dbReference type="OrthoDB" id="9807797at2"/>
<dbReference type="BioCyc" id="SYNEL:SYNPCC7942_1431-MONOMER"/>
<dbReference type="Proteomes" id="UP000889800">
    <property type="component" value="Chromosome"/>
</dbReference>
<dbReference type="GO" id="GO:0003755">
    <property type="term" value="F:peptidyl-prolyl cis-trans isomerase activity"/>
    <property type="evidence" value="ECO:0007669"/>
    <property type="project" value="UniProtKB-KW"/>
</dbReference>
<dbReference type="GO" id="GO:0006457">
    <property type="term" value="P:protein folding"/>
    <property type="evidence" value="ECO:0007669"/>
    <property type="project" value="InterPro"/>
</dbReference>
<dbReference type="CDD" id="cd00317">
    <property type="entry name" value="cyclophilin"/>
    <property type="match status" value="1"/>
</dbReference>
<dbReference type="Gene3D" id="2.40.100.10">
    <property type="entry name" value="Cyclophilin-like"/>
    <property type="match status" value="1"/>
</dbReference>
<dbReference type="InterPro" id="IPR029000">
    <property type="entry name" value="Cyclophilin-like_dom_sf"/>
</dbReference>
<dbReference type="InterPro" id="IPR024936">
    <property type="entry name" value="Cyclophilin-type_PPIase"/>
</dbReference>
<dbReference type="InterPro" id="IPR020892">
    <property type="entry name" value="Cyclophilin-type_PPIase_CS"/>
</dbReference>
<dbReference type="InterPro" id="IPR002130">
    <property type="entry name" value="Cyclophilin-type_PPIase_dom"/>
</dbReference>
<dbReference type="InterPro" id="IPR044666">
    <property type="entry name" value="Cyclophilin_A-like"/>
</dbReference>
<dbReference type="PANTHER" id="PTHR45625">
    <property type="entry name" value="PEPTIDYL-PROLYL CIS-TRANS ISOMERASE-RELATED"/>
    <property type="match status" value="1"/>
</dbReference>
<dbReference type="PANTHER" id="PTHR45625:SF4">
    <property type="entry name" value="PEPTIDYLPROLYL ISOMERASE DOMAIN AND WD REPEAT-CONTAINING PROTEIN 1"/>
    <property type="match status" value="1"/>
</dbReference>
<dbReference type="Pfam" id="PF00160">
    <property type="entry name" value="Pro_isomerase"/>
    <property type="match status" value="1"/>
</dbReference>
<dbReference type="PIRSF" id="PIRSF001467">
    <property type="entry name" value="Peptidylpro_ismrse"/>
    <property type="match status" value="1"/>
</dbReference>
<dbReference type="PRINTS" id="PR00153">
    <property type="entry name" value="CSAPPISMRASE"/>
</dbReference>
<dbReference type="SUPFAM" id="SSF50891">
    <property type="entry name" value="Cyclophilin-like"/>
    <property type="match status" value="1"/>
</dbReference>
<dbReference type="PROSITE" id="PS00170">
    <property type="entry name" value="CSA_PPIASE_1"/>
    <property type="match status" value="1"/>
</dbReference>
<dbReference type="PROSITE" id="PS50072">
    <property type="entry name" value="CSA_PPIASE_2"/>
    <property type="match status" value="1"/>
</dbReference>
<organism>
    <name type="scientific">Synechococcus elongatus (strain ATCC 33912 / PCC 7942 / FACHB-805)</name>
    <name type="common">Anacystis nidulans R2</name>
    <dbReference type="NCBI Taxonomy" id="1140"/>
    <lineage>
        <taxon>Bacteria</taxon>
        <taxon>Bacillati</taxon>
        <taxon>Cyanobacteriota</taxon>
        <taxon>Cyanophyceae</taxon>
        <taxon>Synechococcales</taxon>
        <taxon>Synechococcaceae</taxon>
        <taxon>Synechococcus</taxon>
    </lineage>
</organism>
<comment type="function">
    <text evidence="1">PPIases accelerate the folding of proteins. It catalyzes the cis-trans isomerization of proline imidic peptide bonds in oligopeptides (By similarity).</text>
</comment>
<comment type="catalytic activity">
    <reaction>
        <text>[protein]-peptidylproline (omega=180) = [protein]-peptidylproline (omega=0)</text>
        <dbReference type="Rhea" id="RHEA:16237"/>
        <dbReference type="Rhea" id="RHEA-COMP:10747"/>
        <dbReference type="Rhea" id="RHEA-COMP:10748"/>
        <dbReference type="ChEBI" id="CHEBI:83833"/>
        <dbReference type="ChEBI" id="CHEBI:83834"/>
        <dbReference type="EC" id="5.2.1.8"/>
    </reaction>
</comment>
<comment type="similarity">
    <text evidence="3">Belongs to the cyclophilin-type PPIase family.</text>
</comment>